<dbReference type="EMBL" id="AY653733">
    <property type="protein sequence ID" value="AAV50302.1"/>
    <property type="molecule type" value="Genomic_DNA"/>
</dbReference>
<dbReference type="SMR" id="Q5UP98"/>
<dbReference type="KEGG" id="vg:9924605"/>
<dbReference type="Proteomes" id="UP000001134">
    <property type="component" value="Genome"/>
</dbReference>
<feature type="chain" id="PRO_0000071185" description="Uncharacterized protein L27">
    <location>
        <begin position="1"/>
        <end position="146"/>
    </location>
</feature>
<sequence length="146" mass="17401">MKSENTAFKKTAEGIYEFLDNPLQLTSEKFKSEIEPLLKNPEVKYVLIDSREDYNHQGDKIIRNNLRLVKSWYKNTLEDASLTEKEIYKLVWLPKEKVMDDLMNQGSFWPEEWLFSMKSYYNIPHISLLKKSLDTVKSDKNQNKFQ</sequence>
<accession>Q5UP98</accession>
<reference key="1">
    <citation type="journal article" date="2004" name="Science">
        <title>The 1.2-megabase genome sequence of Mimivirus.</title>
        <authorList>
            <person name="Raoult D."/>
            <person name="Audic S."/>
            <person name="Robert C."/>
            <person name="Abergel C."/>
            <person name="Renesto P."/>
            <person name="Ogata H."/>
            <person name="La Scola B."/>
            <person name="Susan M."/>
            <person name="Claverie J.-M."/>
        </authorList>
    </citation>
    <scope>NUCLEOTIDE SEQUENCE [LARGE SCALE GENOMIC DNA]</scope>
    <source>
        <strain>Rowbotham-Bradford</strain>
    </source>
</reference>
<gene>
    <name type="ordered locus">MIMI_L27</name>
</gene>
<name>YL027_MIMIV</name>
<organism>
    <name type="scientific">Acanthamoeba polyphaga mimivirus</name>
    <name type="common">APMV</name>
    <dbReference type="NCBI Taxonomy" id="212035"/>
    <lineage>
        <taxon>Viruses</taxon>
        <taxon>Varidnaviria</taxon>
        <taxon>Bamfordvirae</taxon>
        <taxon>Nucleocytoviricota</taxon>
        <taxon>Megaviricetes</taxon>
        <taxon>Imitervirales</taxon>
        <taxon>Mimiviridae</taxon>
        <taxon>Megamimivirinae</taxon>
        <taxon>Mimivirus</taxon>
        <taxon>Mimivirus bradfordmassiliense</taxon>
    </lineage>
</organism>
<organismHost>
    <name type="scientific">Acanthamoeba polyphaga</name>
    <name type="common">Amoeba</name>
    <dbReference type="NCBI Taxonomy" id="5757"/>
</organismHost>
<protein>
    <recommendedName>
        <fullName>Uncharacterized protein L27</fullName>
    </recommendedName>
</protein>
<keyword id="KW-1185">Reference proteome</keyword>
<proteinExistence type="predicted"/>